<dbReference type="EC" id="1.1.1.44"/>
<dbReference type="EMBL" id="X71970">
    <property type="protein sequence ID" value="CAA50781.1"/>
    <property type="molecule type" value="Genomic_DNA"/>
</dbReference>
<dbReference type="EMBL" id="AE005674">
    <property type="protein sequence ID" value="AAN43630.1"/>
    <property type="molecule type" value="Genomic_DNA"/>
</dbReference>
<dbReference type="EMBL" id="AE014073">
    <property type="protein sequence ID" value="AAP17458.1"/>
    <property type="molecule type" value="Genomic_DNA"/>
</dbReference>
<dbReference type="EMBL" id="U14468">
    <property type="protein sequence ID" value="AAC43834.1"/>
    <property type="molecule type" value="Genomic_DNA"/>
</dbReference>
<dbReference type="RefSeq" id="NP_707923.1">
    <property type="nucleotide sequence ID" value="NC_004337.2"/>
</dbReference>
<dbReference type="SMR" id="P37756"/>
<dbReference type="STRING" id="198214.SF2091"/>
<dbReference type="PaxDb" id="198214-SF2091"/>
<dbReference type="GeneID" id="1025304"/>
<dbReference type="KEGG" id="sfl:SF2091"/>
<dbReference type="KEGG" id="sfx:S2212"/>
<dbReference type="PATRIC" id="fig|198214.7.peg.2501"/>
<dbReference type="HOGENOM" id="CLU_024540_4_2_6"/>
<dbReference type="UniPathway" id="UPA00115">
    <property type="reaction ID" value="UER00410"/>
</dbReference>
<dbReference type="Proteomes" id="UP000001006">
    <property type="component" value="Chromosome"/>
</dbReference>
<dbReference type="Proteomes" id="UP000002673">
    <property type="component" value="Chromosome"/>
</dbReference>
<dbReference type="GO" id="GO:0050661">
    <property type="term" value="F:NADP binding"/>
    <property type="evidence" value="ECO:0007669"/>
    <property type="project" value="InterPro"/>
</dbReference>
<dbReference type="GO" id="GO:0004616">
    <property type="term" value="F:phosphogluconate dehydrogenase (decarboxylating) activity"/>
    <property type="evidence" value="ECO:0000250"/>
    <property type="project" value="UniProtKB"/>
</dbReference>
<dbReference type="GO" id="GO:0019521">
    <property type="term" value="P:D-gluconate metabolic process"/>
    <property type="evidence" value="ECO:0007669"/>
    <property type="project" value="UniProtKB-KW"/>
</dbReference>
<dbReference type="GO" id="GO:0016054">
    <property type="term" value="P:organic acid catabolic process"/>
    <property type="evidence" value="ECO:0007669"/>
    <property type="project" value="UniProtKB-ARBA"/>
</dbReference>
<dbReference type="GO" id="GO:0006098">
    <property type="term" value="P:pentose-phosphate shunt"/>
    <property type="evidence" value="ECO:0000250"/>
    <property type="project" value="UniProtKB"/>
</dbReference>
<dbReference type="FunFam" id="1.10.1040.10:FF:000002">
    <property type="entry name" value="6-phosphogluconate dehydrogenase, decarboxylating"/>
    <property type="match status" value="1"/>
</dbReference>
<dbReference type="FunFam" id="1.20.5.320:FF:000001">
    <property type="entry name" value="6-phosphogluconate dehydrogenase, decarboxylating"/>
    <property type="match status" value="1"/>
</dbReference>
<dbReference type="FunFam" id="3.40.50.720:FF:000007">
    <property type="entry name" value="6-phosphogluconate dehydrogenase, decarboxylating"/>
    <property type="match status" value="1"/>
</dbReference>
<dbReference type="Gene3D" id="1.20.5.320">
    <property type="entry name" value="6-Phosphogluconate Dehydrogenase, domain 3"/>
    <property type="match status" value="1"/>
</dbReference>
<dbReference type="Gene3D" id="1.10.1040.10">
    <property type="entry name" value="N-(1-d-carboxylethyl)-l-norvaline Dehydrogenase, domain 2"/>
    <property type="match status" value="1"/>
</dbReference>
<dbReference type="Gene3D" id="3.40.50.720">
    <property type="entry name" value="NAD(P)-binding Rossmann-like Domain"/>
    <property type="match status" value="1"/>
</dbReference>
<dbReference type="InterPro" id="IPR008927">
    <property type="entry name" value="6-PGluconate_DH-like_C_sf"/>
</dbReference>
<dbReference type="InterPro" id="IPR013328">
    <property type="entry name" value="6PGD_dom2"/>
</dbReference>
<dbReference type="InterPro" id="IPR006114">
    <property type="entry name" value="6PGDH_C"/>
</dbReference>
<dbReference type="InterPro" id="IPR006113">
    <property type="entry name" value="6PGDH_Gnd/GntZ"/>
</dbReference>
<dbReference type="InterPro" id="IPR006115">
    <property type="entry name" value="6PGDH_NADP-bd"/>
</dbReference>
<dbReference type="InterPro" id="IPR006184">
    <property type="entry name" value="6PGdom_BS"/>
</dbReference>
<dbReference type="InterPro" id="IPR036291">
    <property type="entry name" value="NAD(P)-bd_dom_sf"/>
</dbReference>
<dbReference type="InterPro" id="IPR006183">
    <property type="entry name" value="Pgluconate_DH"/>
</dbReference>
<dbReference type="NCBIfam" id="TIGR00873">
    <property type="entry name" value="gnd"/>
    <property type="match status" value="1"/>
</dbReference>
<dbReference type="NCBIfam" id="NF006765">
    <property type="entry name" value="PRK09287.1"/>
    <property type="match status" value="1"/>
</dbReference>
<dbReference type="PANTHER" id="PTHR11811">
    <property type="entry name" value="6-PHOSPHOGLUCONATE DEHYDROGENASE"/>
    <property type="match status" value="1"/>
</dbReference>
<dbReference type="Pfam" id="PF00393">
    <property type="entry name" value="6PGD"/>
    <property type="match status" value="1"/>
</dbReference>
<dbReference type="Pfam" id="PF03446">
    <property type="entry name" value="NAD_binding_2"/>
    <property type="match status" value="1"/>
</dbReference>
<dbReference type="PIRSF" id="PIRSF000109">
    <property type="entry name" value="6PGD"/>
    <property type="match status" value="1"/>
</dbReference>
<dbReference type="PRINTS" id="PR00076">
    <property type="entry name" value="6PGDHDRGNASE"/>
</dbReference>
<dbReference type="SMART" id="SM01350">
    <property type="entry name" value="6PGD"/>
    <property type="match status" value="1"/>
</dbReference>
<dbReference type="SUPFAM" id="SSF48179">
    <property type="entry name" value="6-phosphogluconate dehydrogenase C-terminal domain-like"/>
    <property type="match status" value="1"/>
</dbReference>
<dbReference type="SUPFAM" id="SSF51735">
    <property type="entry name" value="NAD(P)-binding Rossmann-fold domains"/>
    <property type="match status" value="1"/>
</dbReference>
<dbReference type="PROSITE" id="PS00461">
    <property type="entry name" value="6PGD"/>
    <property type="match status" value="1"/>
</dbReference>
<name>6PGD_SHIFL</name>
<gene>
    <name type="primary">gnd</name>
    <name type="ordered locus">SF2091</name>
    <name type="ordered locus">S2212</name>
</gene>
<keyword id="KW-0311">Gluconate utilization</keyword>
<keyword id="KW-0521">NADP</keyword>
<keyword id="KW-0560">Oxidoreductase</keyword>
<keyword id="KW-0570">Pentose shunt</keyword>
<keyword id="KW-1185">Reference proteome</keyword>
<reference key="1">
    <citation type="journal article" date="1994" name="J. Bacteriol.">
        <title>Characterization of the rfc region of Shigella flexneri.</title>
        <authorList>
            <person name="Morona R."/>
            <person name="Mavris M."/>
            <person name="Fallarino A."/>
            <person name="Manning P.A."/>
        </authorList>
    </citation>
    <scope>NUCLEOTIDE SEQUENCE [GENOMIC DNA]</scope>
    <source>
        <strain>PE577 / Serotype 2a</strain>
    </source>
</reference>
<reference key="2">
    <citation type="journal article" date="2002" name="Nucleic Acids Res.">
        <title>Genome sequence of Shigella flexneri 2a: insights into pathogenicity through comparison with genomes of Escherichia coli K12 and O157.</title>
        <authorList>
            <person name="Jin Q."/>
            <person name="Yuan Z."/>
            <person name="Xu J."/>
            <person name="Wang Y."/>
            <person name="Shen Y."/>
            <person name="Lu W."/>
            <person name="Wang J."/>
            <person name="Liu H."/>
            <person name="Yang J."/>
            <person name="Yang F."/>
            <person name="Zhang X."/>
            <person name="Zhang J."/>
            <person name="Yang G."/>
            <person name="Wu H."/>
            <person name="Qu D."/>
            <person name="Dong J."/>
            <person name="Sun L."/>
            <person name="Xue Y."/>
            <person name="Zhao A."/>
            <person name="Gao Y."/>
            <person name="Zhu J."/>
            <person name="Kan B."/>
            <person name="Ding K."/>
            <person name="Chen S."/>
            <person name="Cheng H."/>
            <person name="Yao Z."/>
            <person name="He B."/>
            <person name="Chen R."/>
            <person name="Ma D."/>
            <person name="Qiang B."/>
            <person name="Wen Y."/>
            <person name="Hou Y."/>
            <person name="Yu J."/>
        </authorList>
    </citation>
    <scope>NUCLEOTIDE SEQUENCE [LARGE SCALE GENOMIC DNA]</scope>
    <source>
        <strain>301 / Serotype 2a</strain>
    </source>
</reference>
<reference key="3">
    <citation type="journal article" date="2003" name="Infect. Immun.">
        <title>Complete genome sequence and comparative genomics of Shigella flexneri serotype 2a strain 2457T.</title>
        <authorList>
            <person name="Wei J."/>
            <person name="Goldberg M.B."/>
            <person name="Burland V."/>
            <person name="Venkatesan M.M."/>
            <person name="Deng W."/>
            <person name="Fournier G."/>
            <person name="Mayhew G.F."/>
            <person name="Plunkett G. III"/>
            <person name="Rose D.J."/>
            <person name="Darling A."/>
            <person name="Mau B."/>
            <person name="Perna N.T."/>
            <person name="Payne S.M."/>
            <person name="Runyen-Janecky L.J."/>
            <person name="Zhou S."/>
            <person name="Schwartz D.C."/>
            <person name="Blattner F.R."/>
        </authorList>
    </citation>
    <scope>NUCLEOTIDE SEQUENCE [LARGE SCALE GENOMIC DNA]</scope>
    <source>
        <strain>ATCC 700930 / 2457T / Serotype 2a</strain>
    </source>
</reference>
<reference key="4">
    <citation type="journal article" date="1994" name="Proc. Natl. Acad. Sci. U.S.A.">
        <title>Intergeneric transfer and recombination of the 6-phosphogluconate dehydrogenase gene (gnd) in enteric bacteria.</title>
        <authorList>
            <person name="Nelson K."/>
            <person name="Selander R.K."/>
        </authorList>
    </citation>
    <scope>NUCLEOTIDE SEQUENCE [GENOMIC DNA] OF 12-456</scope>
    <source>
        <strain>ATCC 29903</strain>
    </source>
</reference>
<evidence type="ECO:0000250" key="1"/>
<evidence type="ECO:0000305" key="2"/>
<comment type="function">
    <text evidence="1">Catalyzes the oxidative decarboxylation of 6-phosphogluconate to ribulose 5-phosphate and CO(2), with concomitant reduction of NADP to NADPH.</text>
</comment>
<comment type="catalytic activity">
    <reaction>
        <text>6-phospho-D-gluconate + NADP(+) = D-ribulose 5-phosphate + CO2 + NADPH</text>
        <dbReference type="Rhea" id="RHEA:10116"/>
        <dbReference type="ChEBI" id="CHEBI:16526"/>
        <dbReference type="ChEBI" id="CHEBI:57783"/>
        <dbReference type="ChEBI" id="CHEBI:58121"/>
        <dbReference type="ChEBI" id="CHEBI:58349"/>
        <dbReference type="ChEBI" id="CHEBI:58759"/>
        <dbReference type="EC" id="1.1.1.44"/>
    </reaction>
</comment>
<comment type="pathway">
    <text>Carbohydrate degradation; pentose phosphate pathway; D-ribulose 5-phosphate from D-glucose 6-phosphate (oxidative stage): step 3/3.</text>
</comment>
<comment type="subunit">
    <text evidence="1">Homodimer.</text>
</comment>
<comment type="similarity">
    <text evidence="2">Belongs to the 6-phosphogluconate dehydrogenase family.</text>
</comment>
<accession>P37756</accession>
<protein>
    <recommendedName>
        <fullName>6-phosphogluconate dehydrogenase, decarboxylating</fullName>
        <ecNumber>1.1.1.44</ecNumber>
    </recommendedName>
</protein>
<feature type="chain" id="PRO_0000090050" description="6-phosphogluconate dehydrogenase, decarboxylating">
    <location>
        <begin position="1"/>
        <end position="468"/>
    </location>
</feature>
<feature type="active site" description="Proton acceptor" evidence="1">
    <location>
        <position position="183"/>
    </location>
</feature>
<feature type="active site" description="Proton donor" evidence="1">
    <location>
        <position position="190"/>
    </location>
</feature>
<feature type="binding site" evidence="1">
    <location>
        <begin position="10"/>
        <end position="15"/>
    </location>
    <ligand>
        <name>NADP(+)</name>
        <dbReference type="ChEBI" id="CHEBI:58349"/>
    </ligand>
</feature>
<feature type="binding site" evidence="1">
    <location>
        <begin position="33"/>
        <end position="35"/>
    </location>
    <ligand>
        <name>NADP(+)</name>
        <dbReference type="ChEBI" id="CHEBI:58349"/>
    </ligand>
</feature>
<feature type="binding site" evidence="1">
    <location>
        <begin position="74"/>
        <end position="76"/>
    </location>
    <ligand>
        <name>NADP(+)</name>
        <dbReference type="ChEBI" id="CHEBI:58349"/>
    </ligand>
</feature>
<feature type="binding site" evidence="1">
    <location>
        <position position="102"/>
    </location>
    <ligand>
        <name>NADP(+)</name>
        <dbReference type="ChEBI" id="CHEBI:58349"/>
    </ligand>
</feature>
<feature type="binding site" description="in other chain" evidence="1">
    <location>
        <position position="102"/>
    </location>
    <ligand>
        <name>substrate</name>
        <note>ligand shared between dimeric partners</note>
    </ligand>
</feature>
<feature type="binding site" description="in other chain" evidence="1">
    <location>
        <begin position="128"/>
        <end position="130"/>
    </location>
    <ligand>
        <name>substrate</name>
        <note>ligand shared between dimeric partners</note>
    </ligand>
</feature>
<feature type="binding site" description="in other chain" evidence="1">
    <location>
        <begin position="186"/>
        <end position="187"/>
    </location>
    <ligand>
        <name>substrate</name>
        <note>ligand shared between dimeric partners</note>
    </ligand>
</feature>
<feature type="binding site" description="in other chain" evidence="1">
    <location>
        <position position="191"/>
    </location>
    <ligand>
        <name>substrate</name>
        <note>ligand shared between dimeric partners</note>
    </ligand>
</feature>
<feature type="binding site" description="in other chain" evidence="1">
    <location>
        <position position="260"/>
    </location>
    <ligand>
        <name>substrate</name>
        <note>ligand shared between dimeric partners</note>
    </ligand>
</feature>
<feature type="binding site" description="in other chain" evidence="1">
    <location>
        <position position="287"/>
    </location>
    <ligand>
        <name>substrate</name>
        <note>ligand shared between dimeric partners</note>
    </ligand>
</feature>
<feature type="binding site" evidence="1">
    <location>
        <position position="445"/>
    </location>
    <ligand>
        <name>substrate</name>
        <note>ligand shared between dimeric partners</note>
    </ligand>
</feature>
<feature type="binding site" evidence="1">
    <location>
        <position position="451"/>
    </location>
    <ligand>
        <name>substrate</name>
        <note>ligand shared between dimeric partners</note>
    </ligand>
</feature>
<proteinExistence type="inferred from homology"/>
<organism>
    <name type="scientific">Shigella flexneri</name>
    <dbReference type="NCBI Taxonomy" id="623"/>
    <lineage>
        <taxon>Bacteria</taxon>
        <taxon>Pseudomonadati</taxon>
        <taxon>Pseudomonadota</taxon>
        <taxon>Gammaproteobacteria</taxon>
        <taxon>Enterobacterales</taxon>
        <taxon>Enterobacteriaceae</taxon>
        <taxon>Shigella</taxon>
    </lineage>
</organism>
<sequence>MSKQQIGVVGMAVMGRNLALNIESRGYTVSIFNRSREKTEEVIAENPGKKLAPYYTVKEFVESLETPRRILLMVKAGAGTDAAIDSLKPYLDKGDIIIDGGNTFFQDTIRRNRELSAEGFNFIGTGVSGGEEGALKGPSIMPGGQKEAYELVAPILTKIAAVAEDGEPCVTYIGADGAGHYVKMVHNGIEYGDMQLIAEAYSLLKGGLNLSNEELAQTFTEWNNGELSSYLIDITKDIFTKKDEDGNYLVDVILDEAANKGTGKWTSQSALDLGEPLSLITESVFARYISSLKDQRVAASKVLSGPQAQSAGDKAEFIEKVRSALYLGKIVSYAQGFSQLRAASEEYNWDLNYGEIAKIFRAGCIIRAQFLQKITDAYAENPQIANLLLAPYFKQIADDYQQALRDVVAYAVQNGIPVPTFAAAVAYYDSYRAAVLPANLIQAQRDYFGAHTYKRIDKEGVFHTEWLD</sequence>